<keyword id="KW-1035">Host cytoplasm</keyword>
<keyword id="KW-0945">Host-virus interaction</keyword>
<keyword id="KW-1185">Reference proteome</keyword>
<reference key="1">
    <citation type="journal article" date="2004" name="J. Gen. Virol.">
        <title>Genetic content of wild-type human cytomegalovirus.</title>
        <authorList>
            <person name="Dolan A."/>
            <person name="Cunningham C."/>
            <person name="Hector R.D."/>
            <person name="Hassan-Walker A.F."/>
            <person name="Lee L."/>
            <person name="Addison C."/>
            <person name="Dargan D.J."/>
            <person name="McGeoch D.J."/>
            <person name="Gatherer D."/>
            <person name="Emery V.C."/>
            <person name="Griffiths P.D."/>
            <person name="Sinzger C."/>
            <person name="McSharry B.P."/>
            <person name="Wilkinson G.W.G."/>
            <person name="Davison A.J."/>
        </authorList>
    </citation>
    <scope>NUCLEOTIDE SEQUENCE [LARGE SCALE GENOMIC DNA]</scope>
</reference>
<organism>
    <name type="scientific">Human cytomegalovirus (strain Merlin)</name>
    <name type="common">HHV-5</name>
    <name type="synonym">Human herpesvirus 5</name>
    <dbReference type="NCBI Taxonomy" id="295027"/>
    <lineage>
        <taxon>Viruses</taxon>
        <taxon>Duplodnaviria</taxon>
        <taxon>Heunggongvirae</taxon>
        <taxon>Peploviricota</taxon>
        <taxon>Herviviricetes</taxon>
        <taxon>Herpesvirales</taxon>
        <taxon>Orthoherpesviridae</taxon>
        <taxon>Betaherpesvirinae</taxon>
        <taxon>Cytomegalovirus</taxon>
        <taxon>Cytomegalovirus humanbeta5</taxon>
        <taxon>Human cytomegalovirus</taxon>
    </lineage>
</organism>
<accession>Q6SWC5</accession>
<accession>D2K3H5</accession>
<comment type="function">
    <text evidence="1">May play a role in rearrangement of cellular cytoskeleton towards an efficient viral assembly and spreading.</text>
</comment>
<comment type="subunit">
    <text evidence="1">Interacts with host IQGAP1.</text>
</comment>
<comment type="subcellular location">
    <subcellularLocation>
        <location evidence="1">Host cytoplasm</location>
    </subcellularLocation>
    <text evidence="1">Localizes within the assembly compartments within host cytoplasm, but is not incorporated in the virion.</text>
</comment>
<gene>
    <name type="primary">UL5</name>
</gene>
<dbReference type="EMBL" id="AY446894">
    <property type="protein sequence ID" value="AAR31571.1"/>
    <property type="molecule type" value="Genomic_DNA"/>
</dbReference>
<dbReference type="RefSeq" id="YP_081465.1">
    <property type="nucleotide sequence ID" value="NC_006273.2"/>
</dbReference>
<dbReference type="DNASU" id="3077425"/>
<dbReference type="GeneID" id="3077425"/>
<dbReference type="KEGG" id="vg:3077425"/>
<dbReference type="Reactome" id="R-HSA-9609690">
    <property type="pathway name" value="HCMV Early Events"/>
</dbReference>
<dbReference type="Proteomes" id="UP000000938">
    <property type="component" value="Segment"/>
</dbReference>
<dbReference type="GO" id="GO:0030430">
    <property type="term" value="C:host cell cytoplasm"/>
    <property type="evidence" value="ECO:0007669"/>
    <property type="project" value="UniProtKB-SubCell"/>
</dbReference>
<dbReference type="InterPro" id="IPR016497">
    <property type="entry name" value="Herpes_UL5"/>
</dbReference>
<dbReference type="PIRSF" id="PIRSF006846">
    <property type="entry name" value="UCP006846_UL5"/>
    <property type="match status" value="1"/>
</dbReference>
<evidence type="ECO:0000250" key="1">
    <source>
        <dbReference type="UniProtKB" id="P16776"/>
    </source>
</evidence>
<proteinExistence type="inferred from homology"/>
<organismHost>
    <name type="scientific">Homo sapiens</name>
    <name type="common">Human</name>
    <dbReference type="NCBI Taxonomy" id="9606"/>
</organismHost>
<feature type="chain" id="PRO_0000418274" description="Protein UL5">
    <location>
        <begin position="1"/>
        <end position="166"/>
    </location>
</feature>
<sequence length="166" mass="18927">MFLGYSDCVDPGLAVYRVSRSRLKLMLSFVWLVGLRFHDCAAFESCCYDITEAESNKAISRDEAAFTSSVSTRTPSLAIAPPPDRSMLLSREEELVPWSRLIITKQFYGGLIFHTTWVTGFVLLGLLTLFASLFRVPQSICRFCIDRLRDIARPLKYRYQRLVATV</sequence>
<protein>
    <recommendedName>
        <fullName>Protein UL5</fullName>
    </recommendedName>
</protein>
<name>UL05_HCMVM</name>